<protein>
    <recommendedName>
        <fullName>pyr operon leader peptide</fullName>
    </recommendedName>
    <alternativeName>
        <fullName>pyrBI operon attenuator</fullName>
    </alternativeName>
</protein>
<organism>
    <name type="scientific">Salmonella typhi</name>
    <dbReference type="NCBI Taxonomy" id="90370"/>
    <lineage>
        <taxon>Bacteria</taxon>
        <taxon>Pseudomonadati</taxon>
        <taxon>Pseudomonadota</taxon>
        <taxon>Gammaproteobacteria</taxon>
        <taxon>Enterobacterales</taxon>
        <taxon>Enterobacteriaceae</taxon>
        <taxon>Salmonella</taxon>
    </lineage>
</organism>
<proteinExistence type="predicted"/>
<gene>
    <name type="primary">pyrL</name>
    <name type="ordered locus">STY4800.1</name>
    <name type="ordered locus">t4496</name>
    <name type="ORF">STY4800A</name>
</gene>
<dbReference type="EMBL" id="AL513382">
    <property type="protein sequence ID" value="CAD06922.1"/>
    <property type="molecule type" value="Genomic_DNA"/>
</dbReference>
<dbReference type="EMBL" id="AE014613">
    <property type="protein sequence ID" value="AAO71943.1"/>
    <property type="molecule type" value="Genomic_DNA"/>
</dbReference>
<dbReference type="RefSeq" id="NP_458879.1">
    <property type="nucleotide sequence ID" value="NC_003198.1"/>
</dbReference>
<dbReference type="RefSeq" id="WP_000249504.1">
    <property type="nucleotide sequence ID" value="NZ_WSUR01000016.1"/>
</dbReference>
<dbReference type="STRING" id="220341.gene:17588622"/>
<dbReference type="KEGG" id="stt:t4496"/>
<dbReference type="KEGG" id="sty:STY4800a"/>
<dbReference type="PATRIC" id="fig|220341.7.peg.4907"/>
<dbReference type="eggNOG" id="ENOG5032CG1">
    <property type="taxonomic scope" value="Bacteria"/>
</dbReference>
<dbReference type="HOGENOM" id="CLU_213745_1_0_6"/>
<dbReference type="OrthoDB" id="6624836at2"/>
<dbReference type="Proteomes" id="UP000000541">
    <property type="component" value="Chromosome"/>
</dbReference>
<dbReference type="Proteomes" id="UP000002670">
    <property type="component" value="Chromosome"/>
</dbReference>
<dbReference type="GO" id="GO:0019856">
    <property type="term" value="P:pyrimidine nucleobase biosynthetic process"/>
    <property type="evidence" value="ECO:0007669"/>
    <property type="project" value="InterPro"/>
</dbReference>
<dbReference type="GO" id="GO:0006221">
    <property type="term" value="P:pyrimidine nucleotide biosynthetic process"/>
    <property type="evidence" value="ECO:0007669"/>
    <property type="project" value="UniProtKB-KW"/>
</dbReference>
<dbReference type="InterPro" id="IPR012602">
    <property type="entry name" value="PyrBI_leader"/>
</dbReference>
<dbReference type="NCBIfam" id="NF007587">
    <property type="entry name" value="PRK10224.1"/>
    <property type="match status" value="1"/>
</dbReference>
<dbReference type="Pfam" id="PF08052">
    <property type="entry name" value="PyrBI_leader"/>
    <property type="match status" value="1"/>
</dbReference>
<dbReference type="PIRSF" id="PIRSF003249">
    <property type="entry name" value="PyrBI_leader"/>
    <property type="match status" value="1"/>
</dbReference>
<accession>P0A1W1</accession>
<accession>P08522</accession>
<reference key="1">
    <citation type="journal article" date="2001" name="Nature">
        <title>Complete genome sequence of a multiple drug resistant Salmonella enterica serovar Typhi CT18.</title>
        <authorList>
            <person name="Parkhill J."/>
            <person name="Dougan G."/>
            <person name="James K.D."/>
            <person name="Thomson N.R."/>
            <person name="Pickard D."/>
            <person name="Wain J."/>
            <person name="Churcher C.M."/>
            <person name="Mungall K.L."/>
            <person name="Bentley S.D."/>
            <person name="Holden M.T.G."/>
            <person name="Sebaihia M."/>
            <person name="Baker S."/>
            <person name="Basham D."/>
            <person name="Brooks K."/>
            <person name="Chillingworth T."/>
            <person name="Connerton P."/>
            <person name="Cronin A."/>
            <person name="Davis P."/>
            <person name="Davies R.M."/>
            <person name="Dowd L."/>
            <person name="White N."/>
            <person name="Farrar J."/>
            <person name="Feltwell T."/>
            <person name="Hamlin N."/>
            <person name="Haque A."/>
            <person name="Hien T.T."/>
            <person name="Holroyd S."/>
            <person name="Jagels K."/>
            <person name="Krogh A."/>
            <person name="Larsen T.S."/>
            <person name="Leather S."/>
            <person name="Moule S."/>
            <person name="O'Gaora P."/>
            <person name="Parry C."/>
            <person name="Quail M.A."/>
            <person name="Rutherford K.M."/>
            <person name="Simmonds M."/>
            <person name="Skelton J."/>
            <person name="Stevens K."/>
            <person name="Whitehead S."/>
            <person name="Barrell B.G."/>
        </authorList>
    </citation>
    <scope>NUCLEOTIDE SEQUENCE [LARGE SCALE GENOMIC DNA]</scope>
    <source>
        <strain>CT18</strain>
    </source>
</reference>
<reference key="2">
    <citation type="journal article" date="2003" name="J. Bacteriol.">
        <title>Comparative genomics of Salmonella enterica serovar Typhi strains Ty2 and CT18.</title>
        <authorList>
            <person name="Deng W."/>
            <person name="Liou S.-R."/>
            <person name="Plunkett G. III"/>
            <person name="Mayhew G.F."/>
            <person name="Rose D.J."/>
            <person name="Burland V."/>
            <person name="Kodoyianni V."/>
            <person name="Schwartz D.C."/>
            <person name="Blattner F.R."/>
        </authorList>
    </citation>
    <scope>NUCLEOTIDE SEQUENCE [LARGE SCALE GENOMIC DNA]</scope>
    <source>
        <strain>ATCC 700931 / Ty2</strain>
    </source>
</reference>
<name>LPPY_SALTI</name>
<keyword id="KW-0428">Leader peptide</keyword>
<keyword id="KW-0665">Pyrimidine biosynthesis</keyword>
<feature type="peptide" id="PRO_0000044763" description="pyr operon leader peptide">
    <location>
        <begin position="1"/>
        <end position="33"/>
    </location>
</feature>
<sequence length="33" mass="3797">MVQCVRHSVLPRLKKDAGLPFFFPLKTNTKPLN</sequence>